<accession>Q2QD38</accession>
<accession>Q4VZL5</accession>
<dbReference type="EC" id="7.1.1.-"/>
<dbReference type="EMBL" id="DQ119058">
    <property type="protein sequence ID" value="AAZ94701.1"/>
    <property type="molecule type" value="Genomic_DNA"/>
</dbReference>
<dbReference type="EMBL" id="AJ970307">
    <property type="protein sequence ID" value="CAJ00812.1"/>
    <property type="molecule type" value="Genomic_DNA"/>
</dbReference>
<dbReference type="EMBL" id="DQ865975">
    <property type="protein sequence ID" value="ABI97466.1"/>
    <property type="molecule type" value="Genomic_DNA"/>
</dbReference>
<dbReference type="EMBL" id="DQ865976">
    <property type="protein sequence ID" value="ABI98797.1"/>
    <property type="molecule type" value="Genomic_DNA"/>
</dbReference>
<dbReference type="RefSeq" id="YP_247653.1">
    <property type="nucleotide sequence ID" value="NC_007144.1"/>
</dbReference>
<dbReference type="SMR" id="Q2QD38"/>
<dbReference type="GeneID" id="3429259"/>
<dbReference type="KEGG" id="csv:3429259"/>
<dbReference type="eggNOG" id="ENOG502QQHR">
    <property type="taxonomic scope" value="Eukaryota"/>
</dbReference>
<dbReference type="OrthoDB" id="1893972at2759"/>
<dbReference type="GO" id="GO:0009535">
    <property type="term" value="C:chloroplast thylakoid membrane"/>
    <property type="evidence" value="ECO:0007669"/>
    <property type="project" value="UniProtKB-SubCell"/>
</dbReference>
<dbReference type="GO" id="GO:0008137">
    <property type="term" value="F:NADH dehydrogenase (ubiquinone) activity"/>
    <property type="evidence" value="ECO:0007669"/>
    <property type="project" value="InterPro"/>
</dbReference>
<dbReference type="GO" id="GO:0048038">
    <property type="term" value="F:quinone binding"/>
    <property type="evidence" value="ECO:0007669"/>
    <property type="project" value="UniProtKB-KW"/>
</dbReference>
<dbReference type="FunFam" id="1.20.120.1200:FF:000002">
    <property type="entry name" value="NAD(P)H-quinone oxidoreductase subunit 6, chloroplastic"/>
    <property type="match status" value="1"/>
</dbReference>
<dbReference type="Gene3D" id="1.20.120.1200">
    <property type="entry name" value="NADH-ubiquinone/plastoquinone oxidoreductase chain 6, subunit NuoJ"/>
    <property type="match status" value="1"/>
</dbReference>
<dbReference type="InterPro" id="IPR050290">
    <property type="entry name" value="NAD(P)H-Q_Oxidoreduct_6"/>
</dbReference>
<dbReference type="InterPro" id="IPR001457">
    <property type="entry name" value="NADH_UbQ/plastoQ_OxRdtase_su6"/>
</dbReference>
<dbReference type="InterPro" id="IPR042106">
    <property type="entry name" value="Nuo/plastoQ_OxRdtase_6_NuoJ"/>
</dbReference>
<dbReference type="PANTHER" id="PTHR48479">
    <property type="entry name" value="NAD(P)H-QUINONE OXIDOREDUCTASE SUBUNIT 6, CHLOROPLASTIC"/>
    <property type="match status" value="1"/>
</dbReference>
<dbReference type="PANTHER" id="PTHR48479:SF1">
    <property type="entry name" value="NAD(P)H-QUINONE OXIDOREDUCTASE SUBUNIT 6, CHLOROPLASTIC"/>
    <property type="match status" value="1"/>
</dbReference>
<dbReference type="Pfam" id="PF00499">
    <property type="entry name" value="Oxidored_q3"/>
    <property type="match status" value="1"/>
</dbReference>
<keyword id="KW-0150">Chloroplast</keyword>
<keyword id="KW-0472">Membrane</keyword>
<keyword id="KW-0520">NAD</keyword>
<keyword id="KW-0521">NADP</keyword>
<keyword id="KW-0934">Plastid</keyword>
<keyword id="KW-0618">Plastoquinone</keyword>
<keyword id="KW-0874">Quinone</keyword>
<keyword id="KW-0793">Thylakoid</keyword>
<keyword id="KW-1278">Translocase</keyword>
<keyword id="KW-0812">Transmembrane</keyword>
<keyword id="KW-1133">Transmembrane helix</keyword>
<keyword id="KW-0813">Transport</keyword>
<feature type="chain" id="PRO_0000360246" description="NAD(P)H-quinone oxidoreductase subunit 6, chloroplastic">
    <location>
        <begin position="1"/>
        <end position="176"/>
    </location>
</feature>
<feature type="transmembrane region" description="Helical" evidence="2">
    <location>
        <begin position="10"/>
        <end position="30"/>
    </location>
</feature>
<feature type="transmembrane region" description="Helical" evidence="2">
    <location>
        <begin position="33"/>
        <end position="53"/>
    </location>
</feature>
<feature type="transmembrane region" description="Helical" evidence="2">
    <location>
        <begin position="61"/>
        <end position="81"/>
    </location>
</feature>
<feature type="transmembrane region" description="Helical" evidence="2">
    <location>
        <begin position="92"/>
        <end position="112"/>
    </location>
</feature>
<feature type="transmembrane region" description="Helical" evidence="2">
    <location>
        <begin position="152"/>
        <end position="172"/>
    </location>
</feature>
<feature type="sequence variant" description="In strain: cv. Borszczagowski.">
    <original>L</original>
    <variation>W</variation>
    <location>
        <position position="15"/>
    </location>
</feature>
<organism>
    <name type="scientific">Cucumis sativus</name>
    <name type="common">Cucumber</name>
    <dbReference type="NCBI Taxonomy" id="3659"/>
    <lineage>
        <taxon>Eukaryota</taxon>
        <taxon>Viridiplantae</taxon>
        <taxon>Streptophyta</taxon>
        <taxon>Embryophyta</taxon>
        <taxon>Tracheophyta</taxon>
        <taxon>Spermatophyta</taxon>
        <taxon>Magnoliopsida</taxon>
        <taxon>eudicotyledons</taxon>
        <taxon>Gunneridae</taxon>
        <taxon>Pentapetalae</taxon>
        <taxon>rosids</taxon>
        <taxon>fabids</taxon>
        <taxon>Cucurbitales</taxon>
        <taxon>Cucurbitaceae</taxon>
        <taxon>Benincaseae</taxon>
        <taxon>Cucumis</taxon>
    </lineage>
</organism>
<geneLocation type="chloroplast"/>
<proteinExistence type="inferred from homology"/>
<sequence length="176" mass="19249">MDLPGPIHDFLVVLLGSGLILGSMGVLLFNNSIYSAFSLGLVLVSISLFYILANAQFVAAAQLLIYVGAINVLIIFAVMFMKGSEYSKDFNLWTVGNGVTFLVCTSIFVSLMTTIVDTSWYGIIWTTRSNQILEQDLISNSQQIGIYLSTYFFLPFELISIILLAALIGAIAVARQ</sequence>
<protein>
    <recommendedName>
        <fullName>NAD(P)H-quinone oxidoreductase subunit 6, chloroplastic</fullName>
        <ecNumber>7.1.1.-</ecNumber>
    </recommendedName>
    <alternativeName>
        <fullName>NAD(P)H dehydrogenase subunit 6</fullName>
    </alternativeName>
    <alternativeName>
        <fullName>NADH-plastoquinone oxidoreductase subunit 6</fullName>
    </alternativeName>
</protein>
<name>NU6C_CUCSA</name>
<comment type="function">
    <text evidence="1">NDH shuttles electrons from NAD(P)H:plastoquinone, via FMN and iron-sulfur (Fe-S) centers, to quinones in the photosynthetic chain and possibly in a chloroplast respiratory chain. The immediate electron acceptor for the enzyme in this species is believed to be plastoquinone. Couples the redox reaction to proton translocation, and thus conserves the redox energy in a proton gradient (By similarity).</text>
</comment>
<comment type="catalytic activity">
    <reaction>
        <text>a plastoquinone + NADH + (n+1) H(+)(in) = a plastoquinol + NAD(+) + n H(+)(out)</text>
        <dbReference type="Rhea" id="RHEA:42608"/>
        <dbReference type="Rhea" id="RHEA-COMP:9561"/>
        <dbReference type="Rhea" id="RHEA-COMP:9562"/>
        <dbReference type="ChEBI" id="CHEBI:15378"/>
        <dbReference type="ChEBI" id="CHEBI:17757"/>
        <dbReference type="ChEBI" id="CHEBI:57540"/>
        <dbReference type="ChEBI" id="CHEBI:57945"/>
        <dbReference type="ChEBI" id="CHEBI:62192"/>
    </reaction>
</comment>
<comment type="catalytic activity">
    <reaction>
        <text>a plastoquinone + NADPH + (n+1) H(+)(in) = a plastoquinol + NADP(+) + n H(+)(out)</text>
        <dbReference type="Rhea" id="RHEA:42612"/>
        <dbReference type="Rhea" id="RHEA-COMP:9561"/>
        <dbReference type="Rhea" id="RHEA-COMP:9562"/>
        <dbReference type="ChEBI" id="CHEBI:15378"/>
        <dbReference type="ChEBI" id="CHEBI:17757"/>
        <dbReference type="ChEBI" id="CHEBI:57783"/>
        <dbReference type="ChEBI" id="CHEBI:58349"/>
        <dbReference type="ChEBI" id="CHEBI:62192"/>
    </reaction>
</comment>
<comment type="subunit">
    <text evidence="1">NDH is composed of at least 16 different subunits, 5 of which are encoded in the nucleus.</text>
</comment>
<comment type="subcellular location">
    <subcellularLocation>
        <location evidence="1">Plastid</location>
        <location evidence="1">Chloroplast thylakoid membrane</location>
        <topology evidence="1">Multi-pass membrane protein</topology>
    </subcellularLocation>
</comment>
<comment type="similarity">
    <text evidence="3">Belongs to the complex I subunit 6 family.</text>
</comment>
<evidence type="ECO:0000250" key="1"/>
<evidence type="ECO:0000255" key="2"/>
<evidence type="ECO:0000305" key="3"/>
<reference key="1">
    <citation type="journal article" date="2006" name="Plant Cell Rep.">
        <title>Complete sequence and organization of the cucumber (Cucumis sativus L. cv. Baekmibaekdadagi) chloroplast genome.</title>
        <authorList>
            <person name="Kim J.-S."/>
            <person name="Jung J.D."/>
            <person name="Lee J.-A."/>
            <person name="Park H.-W."/>
            <person name="Oh K.-H."/>
            <person name="Jeong W.J."/>
            <person name="Choi D.-W."/>
            <person name="Liu J.R."/>
            <person name="Cho K.Y."/>
        </authorList>
    </citation>
    <scope>NUCLEOTIDE SEQUENCE [LARGE SCALE GENOMIC DNA]</scope>
    <source>
        <strain>cv. Baekmibaekdadagi</strain>
    </source>
</reference>
<reference key="2">
    <citation type="journal article" date="2007" name="Cell. Mol. Biol. Lett.">
        <title>The complete structure of the cucumber (Cucumis sativus L.) chloroplast genome: its composition and comparative analysis.</title>
        <authorList>
            <person name="Plader W.W."/>
            <person name="Yukawa Y."/>
            <person name="Sugiura M."/>
            <person name="Malepszy S."/>
        </authorList>
    </citation>
    <scope>NUCLEOTIDE SEQUENCE [LARGE SCALE GENOMIC DNA]</scope>
    <source>
        <strain>cv. Borszczagowski</strain>
    </source>
</reference>
<reference key="3">
    <citation type="journal article" date="2007" name="Genome">
        <title>Sequencing cucumber (Cucumis sativus L.) chloroplast genomes identifies differences between chilling-tolerant and -susceptible cucumber lines.</title>
        <authorList>
            <person name="Chung S.-M."/>
            <person name="Gordon V.S."/>
            <person name="Staub J.E."/>
        </authorList>
    </citation>
    <scope>NUCLEOTIDE SEQUENCE [LARGE SCALE GENOMIC DNA]</scope>
    <source>
        <strain>cv. Chipper</strain>
        <strain>cv. Gy14</strain>
    </source>
</reference>
<gene>
    <name type="primary">ndhG</name>
    <name type="ordered locus">CsCp108</name>
</gene>